<evidence type="ECO:0000255" key="1"/>
<evidence type="ECO:0000255" key="2">
    <source>
        <dbReference type="PROSITE-ProRule" id="PRU00434"/>
    </source>
</evidence>
<evidence type="ECO:0000255" key="3">
    <source>
        <dbReference type="PROSITE-ProRule" id="PRU00498"/>
    </source>
</evidence>
<evidence type="ECO:0000269" key="4">
    <source>
    </source>
</evidence>
<evidence type="ECO:0000303" key="5">
    <source>
    </source>
</evidence>
<evidence type="ECO:0000305" key="6"/>
<evidence type="ECO:0000305" key="7">
    <source>
    </source>
</evidence>
<name>ABCG_ASPFU</name>
<accession>Q4W9C7</accession>
<gene>
    <name evidence="5" type="primary">abcG</name>
    <name type="ORF">AFUA_4G01050</name>
</gene>
<proteinExistence type="inferred from homology"/>
<organism>
    <name type="scientific">Aspergillus fumigatus (strain ATCC MYA-4609 / CBS 101355 / FGSC A1100 / Af293)</name>
    <name type="common">Neosartorya fumigata</name>
    <dbReference type="NCBI Taxonomy" id="330879"/>
    <lineage>
        <taxon>Eukaryota</taxon>
        <taxon>Fungi</taxon>
        <taxon>Dikarya</taxon>
        <taxon>Ascomycota</taxon>
        <taxon>Pezizomycotina</taxon>
        <taxon>Eurotiomycetes</taxon>
        <taxon>Eurotiomycetidae</taxon>
        <taxon>Eurotiales</taxon>
        <taxon>Aspergillaceae</taxon>
        <taxon>Aspergillus</taxon>
        <taxon>Aspergillus subgen. Fumigati</taxon>
    </lineage>
</organism>
<sequence length="1349" mass="151535">MDTPSSGTIDLEHGEAGLRKRLTLTFRSVSVHVTAPDAALGDTLLSVADPRQFLGFLKGSRPKRTILKDVSGQVKPGEMLLVLGRPGSGCTSLLRVLSNDRESFDEVIGETRYGSMDHVAARRFRQQIMFNNEDDVHFPTLTVNRTMKFALRNKVPRERPDGQGSKEFVQEQRDNILSALGIRHTTKTLVGNEFIRGVSGGERKRVSLAEVIAGQSPIQVWDNPTRGLDSKTAVEFARLLRREADMNQKTMVATMYQAGNGIYNEFDQVLVLADGRVTYYGPRQLAKSYFEDMGFVCPKGANVADFLTSVTVLTERIVRPGMEDKVPSTAEEFEARYRQSDIHQKAMEGFDPPEKLTHEVDELTAAVASEKRKRHLPRSPSVYTTSLWEQIQACTIRQFQIMAGDRLSLIIKVVSAILQALVCGSLFYNLKDDSSSIFLRPGALFFPVLYFLLESMSETTASFMGRPILSRQKRFGFYRPTAFCIANAITDIPVVLVQVSCFCIILYFMAALQMDAGRFFTYWIIVIANTLCFMQMFRAVGALCKRFGNASKITGLLSTIFFVYGGYLIPYEKMHVWFRWIFYLNPGAYAFEALMANEFVGKSLQCVQPDYIPYGSGYPGSESPYRGCSIPGSEGDVILGAAYIRAQYNYSWHHIWRSFGVIIGFWVFFIVLTALGLELLNSQGGSSVLLYKRGSQKTRSEDTTTPVQEAARASHAKQSTFTWHDLDYHVPYQGQKKQLLDKVFGFVKPGNLVALMGCSGAGKTTLLDVLAQRKDSGEIYGSILIDGRPQGISFQRTTGYCEQMDVHEPTATVREALVFSALLRQPAHVPREEKLAYVDHIIDLLELRDISDALIGVPGAGLSIEQRKRVTLGVELVAKPTLLFLDEPTSGLDGQSAYNIIRFLRKLVDGGQAVLCTIHQPSAVLFEAFDSLLLLARGGKMAYFGETGKDSQTVLDYFARHGAPCPPDENPAEHIVEVIQGNTDKPIDWVQVWNESEEKQRALAQLQTLNARGKADADYVEDTADYATSKWFQFTMVTKRLMVQLWRSPDYVWNKVILHVFAALFSGFTFWKIGDGAFDLQLRLFAIFNFIFVAPGCINQMQPFFLHNRDIFEAREKKSKIYHWLAFIGAQTVSEIPYLILCATLYFACWYFTAGFPTTASISGHMYLQMIFYEFLYTSIGQGIAAYAPNEYFAAVMNPVLIGAGLVSFCGVVVPFSQMQPFWRDWLYYLDPFTYLVGGLLGEVLWDVEVRCDPSELVRFRAPLGQTCGEYMAAFLAEKPGYLVDGNATACEFCQYSTGADYARTFNLKERYYSWRDTGITALFCVSSYAMVFLMMKLRSKKTKSARSE</sequence>
<keyword id="KW-0067">ATP-binding</keyword>
<keyword id="KW-1003">Cell membrane</keyword>
<keyword id="KW-0325">Glycoprotein</keyword>
<keyword id="KW-0378">Hydrolase</keyword>
<keyword id="KW-0472">Membrane</keyword>
<keyword id="KW-0547">Nucleotide-binding</keyword>
<keyword id="KW-1185">Reference proteome</keyword>
<keyword id="KW-0677">Repeat</keyword>
<keyword id="KW-0812">Transmembrane</keyword>
<keyword id="KW-1133">Transmembrane helix</keyword>
<keyword id="KW-0813">Transport</keyword>
<reference key="1">
    <citation type="journal article" date="2005" name="Nature">
        <title>Genomic sequence of the pathogenic and allergenic filamentous fungus Aspergillus fumigatus.</title>
        <authorList>
            <person name="Nierman W.C."/>
            <person name="Pain A."/>
            <person name="Anderson M.J."/>
            <person name="Wortman J.R."/>
            <person name="Kim H.S."/>
            <person name="Arroyo J."/>
            <person name="Berriman M."/>
            <person name="Abe K."/>
            <person name="Archer D.B."/>
            <person name="Bermejo C."/>
            <person name="Bennett J.W."/>
            <person name="Bowyer P."/>
            <person name="Chen D."/>
            <person name="Collins M."/>
            <person name="Coulsen R."/>
            <person name="Davies R."/>
            <person name="Dyer P.S."/>
            <person name="Farman M.L."/>
            <person name="Fedorova N."/>
            <person name="Fedorova N.D."/>
            <person name="Feldblyum T.V."/>
            <person name="Fischer R."/>
            <person name="Fosker N."/>
            <person name="Fraser A."/>
            <person name="Garcia J.L."/>
            <person name="Garcia M.J."/>
            <person name="Goble A."/>
            <person name="Goldman G.H."/>
            <person name="Gomi K."/>
            <person name="Griffith-Jones S."/>
            <person name="Gwilliam R."/>
            <person name="Haas B.J."/>
            <person name="Haas H."/>
            <person name="Harris D.E."/>
            <person name="Horiuchi H."/>
            <person name="Huang J."/>
            <person name="Humphray S."/>
            <person name="Jimenez J."/>
            <person name="Keller N."/>
            <person name="Khouri H."/>
            <person name="Kitamoto K."/>
            <person name="Kobayashi T."/>
            <person name="Konzack S."/>
            <person name="Kulkarni R."/>
            <person name="Kumagai T."/>
            <person name="Lafton A."/>
            <person name="Latge J.-P."/>
            <person name="Li W."/>
            <person name="Lord A."/>
            <person name="Lu C."/>
            <person name="Majoros W.H."/>
            <person name="May G.S."/>
            <person name="Miller B.L."/>
            <person name="Mohamoud Y."/>
            <person name="Molina M."/>
            <person name="Monod M."/>
            <person name="Mouyna I."/>
            <person name="Mulligan S."/>
            <person name="Murphy L.D."/>
            <person name="O'Neil S."/>
            <person name="Paulsen I."/>
            <person name="Penalva M.A."/>
            <person name="Pertea M."/>
            <person name="Price C."/>
            <person name="Pritchard B.L."/>
            <person name="Quail M.A."/>
            <person name="Rabbinowitsch E."/>
            <person name="Rawlins N."/>
            <person name="Rajandream M.A."/>
            <person name="Reichard U."/>
            <person name="Renauld H."/>
            <person name="Robson G.D."/>
            <person name="Rodriguez de Cordoba S."/>
            <person name="Rodriguez-Pena J.M."/>
            <person name="Ronning C.M."/>
            <person name="Rutter S."/>
            <person name="Salzberg S.L."/>
            <person name="Sanchez M."/>
            <person name="Sanchez-Ferrero J.C."/>
            <person name="Saunders D."/>
            <person name="Seeger K."/>
            <person name="Squares R."/>
            <person name="Squares S."/>
            <person name="Takeuchi M."/>
            <person name="Tekaia F."/>
            <person name="Turner G."/>
            <person name="Vazquez de Aldana C.R."/>
            <person name="Weidman J."/>
            <person name="White O."/>
            <person name="Woodward J.R."/>
            <person name="Yu J.-H."/>
            <person name="Fraser C.M."/>
            <person name="Galagan J.E."/>
            <person name="Asai K."/>
            <person name="Machida M."/>
            <person name="Hall N."/>
            <person name="Barrell B.G."/>
            <person name="Denning D.W."/>
        </authorList>
    </citation>
    <scope>NUCLEOTIDE SEQUENCE [LARGE SCALE GENOMIC DNA]</scope>
    <source>
        <strain>ATCC MYA-4609 / CBS 101355 / FGSC A1100 / Af293</strain>
    </source>
</reference>
<reference key="2">
    <citation type="journal article" date="2020" name="MBio">
        <title>Characterization of the efflux capability and substrate specificity of Aspergillus fumigatus PDR5-like ABC transporters expressed in Saccharomyces cerevisiae.</title>
        <authorList>
            <person name="Esquivel B.D."/>
            <person name="Rybak J.M."/>
            <person name="Barker K.S."/>
            <person name="Fortwendel J.R."/>
            <person name="Rogers P.D."/>
            <person name="White T.C."/>
        </authorList>
    </citation>
    <scope>FUNCTION</scope>
</reference>
<comment type="function">
    <text evidence="4">ABC efflux transporter that seems not to be able to transport azoles, nor rhodamine 6G (R-6G), a known substrate for many ABC transporters.</text>
</comment>
<comment type="subcellular location">
    <subcellularLocation>
        <location evidence="7">Cell membrane</location>
        <topology evidence="1">Multi-pass membrane protein</topology>
    </subcellularLocation>
</comment>
<comment type="similarity">
    <text evidence="6">Belongs to the ABC transporter superfamily. ABCG family. PDR (TC 3.A.1.205) subfamily.</text>
</comment>
<dbReference type="EMBL" id="AAHF01000017">
    <property type="protein sequence ID" value="EAL84314.2"/>
    <property type="molecule type" value="Genomic_DNA"/>
</dbReference>
<dbReference type="RefSeq" id="XP_746352.2">
    <property type="nucleotide sequence ID" value="XM_741259.2"/>
</dbReference>
<dbReference type="SMR" id="Q4W9C7"/>
<dbReference type="GlyCosmos" id="Q4W9C7">
    <property type="glycosylation" value="5 sites, No reported glycans"/>
</dbReference>
<dbReference type="EnsemblFungi" id="EAL84314">
    <property type="protein sequence ID" value="EAL84314"/>
    <property type="gene ID" value="AFUA_4G01050"/>
</dbReference>
<dbReference type="GeneID" id="3503854"/>
<dbReference type="KEGG" id="afm:AFUA_4G01050"/>
<dbReference type="VEuPathDB" id="FungiDB:Afu4g01050"/>
<dbReference type="eggNOG" id="KOG0065">
    <property type="taxonomic scope" value="Eukaryota"/>
</dbReference>
<dbReference type="HOGENOM" id="CLU_000604_35_0_1"/>
<dbReference type="InParanoid" id="Q4W9C7"/>
<dbReference type="OMA" id="DYHVPFH"/>
<dbReference type="OrthoDB" id="245989at2759"/>
<dbReference type="Proteomes" id="UP000002530">
    <property type="component" value="Chromosome 4"/>
</dbReference>
<dbReference type="GO" id="GO:0005886">
    <property type="term" value="C:plasma membrane"/>
    <property type="evidence" value="ECO:0007669"/>
    <property type="project" value="UniProtKB-SubCell"/>
</dbReference>
<dbReference type="GO" id="GO:0140359">
    <property type="term" value="F:ABC-type transporter activity"/>
    <property type="evidence" value="ECO:0007669"/>
    <property type="project" value="InterPro"/>
</dbReference>
<dbReference type="GO" id="GO:0005524">
    <property type="term" value="F:ATP binding"/>
    <property type="evidence" value="ECO:0007669"/>
    <property type="project" value="UniProtKB-KW"/>
</dbReference>
<dbReference type="GO" id="GO:0016887">
    <property type="term" value="F:ATP hydrolysis activity"/>
    <property type="evidence" value="ECO:0007669"/>
    <property type="project" value="InterPro"/>
</dbReference>
<dbReference type="CDD" id="cd03233">
    <property type="entry name" value="ABCG_PDR_domain1"/>
    <property type="match status" value="1"/>
</dbReference>
<dbReference type="CDD" id="cd03232">
    <property type="entry name" value="ABCG_PDR_domain2"/>
    <property type="match status" value="1"/>
</dbReference>
<dbReference type="FunFam" id="3.40.50.300:FF:000054">
    <property type="entry name" value="ABC multidrug transporter atrF"/>
    <property type="match status" value="1"/>
</dbReference>
<dbReference type="FunFam" id="3.40.50.300:FF:002538">
    <property type="entry name" value="ABC multidrug transporter, putative"/>
    <property type="match status" value="1"/>
</dbReference>
<dbReference type="Gene3D" id="3.40.50.300">
    <property type="entry name" value="P-loop containing nucleotide triphosphate hydrolases"/>
    <property type="match status" value="2"/>
</dbReference>
<dbReference type="InterPro" id="IPR003593">
    <property type="entry name" value="AAA+_ATPase"/>
</dbReference>
<dbReference type="InterPro" id="IPR013525">
    <property type="entry name" value="ABC2_TM"/>
</dbReference>
<dbReference type="InterPro" id="IPR003439">
    <property type="entry name" value="ABC_transporter-like_ATP-bd"/>
</dbReference>
<dbReference type="InterPro" id="IPR017871">
    <property type="entry name" value="ABC_transporter-like_CS"/>
</dbReference>
<dbReference type="InterPro" id="IPR043926">
    <property type="entry name" value="ABCG_dom"/>
</dbReference>
<dbReference type="InterPro" id="IPR034001">
    <property type="entry name" value="ABCG_PDR_1"/>
</dbReference>
<dbReference type="InterPro" id="IPR034003">
    <property type="entry name" value="ABCG_PDR_2"/>
</dbReference>
<dbReference type="InterPro" id="IPR027417">
    <property type="entry name" value="P-loop_NTPase"/>
</dbReference>
<dbReference type="InterPro" id="IPR010929">
    <property type="entry name" value="PDR_CDR_ABC"/>
</dbReference>
<dbReference type="PANTHER" id="PTHR19241">
    <property type="entry name" value="ATP-BINDING CASSETTE TRANSPORTER"/>
    <property type="match status" value="1"/>
</dbReference>
<dbReference type="Pfam" id="PF01061">
    <property type="entry name" value="ABC2_membrane"/>
    <property type="match status" value="2"/>
</dbReference>
<dbReference type="Pfam" id="PF19055">
    <property type="entry name" value="ABC2_membrane_7"/>
    <property type="match status" value="1"/>
</dbReference>
<dbReference type="Pfam" id="PF00005">
    <property type="entry name" value="ABC_tran"/>
    <property type="match status" value="2"/>
</dbReference>
<dbReference type="Pfam" id="PF06422">
    <property type="entry name" value="PDR_CDR"/>
    <property type="match status" value="1"/>
</dbReference>
<dbReference type="SMART" id="SM00382">
    <property type="entry name" value="AAA"/>
    <property type="match status" value="2"/>
</dbReference>
<dbReference type="SUPFAM" id="SSF52540">
    <property type="entry name" value="P-loop containing nucleoside triphosphate hydrolases"/>
    <property type="match status" value="2"/>
</dbReference>
<dbReference type="PROSITE" id="PS00211">
    <property type="entry name" value="ABC_TRANSPORTER_1"/>
    <property type="match status" value="1"/>
</dbReference>
<dbReference type="PROSITE" id="PS50893">
    <property type="entry name" value="ABC_TRANSPORTER_2"/>
    <property type="match status" value="2"/>
</dbReference>
<protein>
    <recommendedName>
        <fullName evidence="5">ABC multidrug transporter G</fullName>
    </recommendedName>
</protein>
<feature type="chain" id="PRO_0000452660" description="ABC multidrug transporter G">
    <location>
        <begin position="1"/>
        <end position="1349"/>
    </location>
</feature>
<feature type="transmembrane region" description="Helical" evidence="1">
    <location>
        <begin position="407"/>
        <end position="427"/>
    </location>
</feature>
<feature type="transmembrane region" description="Helical" evidence="1">
    <location>
        <begin position="436"/>
        <end position="456"/>
    </location>
</feature>
<feature type="transmembrane region" description="Helical" evidence="1">
    <location>
        <begin position="492"/>
        <end position="512"/>
    </location>
</feature>
<feature type="transmembrane region" description="Helical" evidence="1">
    <location>
        <begin position="523"/>
        <end position="543"/>
    </location>
</feature>
<feature type="transmembrane region" description="Helical" evidence="1">
    <location>
        <begin position="550"/>
        <end position="570"/>
    </location>
</feature>
<feature type="transmembrane region" description="Helical" evidence="1">
    <location>
        <begin position="580"/>
        <end position="600"/>
    </location>
</feature>
<feature type="transmembrane region" description="Helical" evidence="1">
    <location>
        <begin position="659"/>
        <end position="679"/>
    </location>
</feature>
<feature type="transmembrane region" description="Helical" evidence="1">
    <location>
        <begin position="1056"/>
        <end position="1076"/>
    </location>
</feature>
<feature type="transmembrane region" description="Helical" evidence="1">
    <location>
        <begin position="1085"/>
        <end position="1105"/>
    </location>
</feature>
<feature type="transmembrane region" description="Helical" evidence="1">
    <location>
        <begin position="1121"/>
        <end position="1143"/>
    </location>
</feature>
<feature type="transmembrane region" description="Helical" evidence="1">
    <location>
        <begin position="1166"/>
        <end position="1186"/>
    </location>
</feature>
<feature type="transmembrane region" description="Helical" evidence="1">
    <location>
        <begin position="1193"/>
        <end position="1213"/>
    </location>
</feature>
<feature type="transmembrane region" description="Helical" evidence="1">
    <location>
        <begin position="1226"/>
        <end position="1246"/>
    </location>
</feature>
<feature type="transmembrane region" description="Helical" evidence="1">
    <location>
        <begin position="1318"/>
        <end position="1338"/>
    </location>
</feature>
<feature type="domain" description="ABC transporter 1" evidence="2">
    <location>
        <begin position="51"/>
        <end position="299"/>
    </location>
</feature>
<feature type="domain" description="ABC transporter 2" evidence="2">
    <location>
        <begin position="721"/>
        <end position="963"/>
    </location>
</feature>
<feature type="binding site" evidence="2">
    <location>
        <begin position="757"/>
        <end position="764"/>
    </location>
    <ligand>
        <name>ATP</name>
        <dbReference type="ChEBI" id="CHEBI:30616"/>
    </ligand>
</feature>
<feature type="glycosylation site" description="N-linked (GlcNAc...) asparagine" evidence="3">
    <location>
        <position position="144"/>
    </location>
</feature>
<feature type="glycosylation site" description="N-linked (GlcNAc...) asparagine" evidence="3">
    <location>
        <position position="549"/>
    </location>
</feature>
<feature type="glycosylation site" description="N-linked (GlcNAc...) asparagine" evidence="3">
    <location>
        <position position="649"/>
    </location>
</feature>
<feature type="glycosylation site" description="N-linked (GlcNAc...) asparagine" evidence="3">
    <location>
        <position position="994"/>
    </location>
</feature>
<feature type="glycosylation site" description="N-linked (GlcNAc...) asparagine" evidence="3">
    <location>
        <position position="1287"/>
    </location>
</feature>